<organism>
    <name type="scientific">Burkholderia pseudomallei (strain 668)</name>
    <dbReference type="NCBI Taxonomy" id="320373"/>
    <lineage>
        <taxon>Bacteria</taxon>
        <taxon>Pseudomonadati</taxon>
        <taxon>Pseudomonadota</taxon>
        <taxon>Betaproteobacteria</taxon>
        <taxon>Burkholderiales</taxon>
        <taxon>Burkholderiaceae</taxon>
        <taxon>Burkholderia</taxon>
        <taxon>pseudomallei group</taxon>
    </lineage>
</organism>
<sequence>MTKRRVVVGMSGGVDSSVTAWLLKEQGYDVVGLFMKNWEDDDDGEYCSTRQDWIDVVSVADLIGIDVEAVNFAAEYKDRVFAEFLREYSAGRTPNPDVLCNAEIKFKAFLDHAMSLGAQTIATGHYARVRERDGRFELLKAFDHTKDQSYFLHRLNQAQLSKTMFPLGEIPKTRVREIAAQIGLPNAKKKDSTGICFIGERPFRDFLNRYLPTKPGPMKTPDGKTVGEHIGLAFYTFGQRKGIGLGGSKDGSGEPWFVAAKDIASNTLYVVQGHDHPWLRSRELVAGNVSWVAGEPPADGARCGAKTRYRQADAPCAFGRAAQAGDERFSLVFDEPQWAVTPGQSAVLYDGDVCLGGGIIESAATGRAGTAPAGRAPALVEAR</sequence>
<dbReference type="EC" id="2.8.1.13" evidence="1"/>
<dbReference type="EMBL" id="CP000570">
    <property type="protein sequence ID" value="ABN83059.1"/>
    <property type="molecule type" value="Genomic_DNA"/>
</dbReference>
<dbReference type="RefSeq" id="WP_004544237.1">
    <property type="nucleotide sequence ID" value="NC_009074.1"/>
</dbReference>
<dbReference type="SMR" id="A3NDE4"/>
<dbReference type="KEGG" id="bpd:BURPS668_3354"/>
<dbReference type="HOGENOM" id="CLU_035188_1_0_4"/>
<dbReference type="GO" id="GO:0005737">
    <property type="term" value="C:cytoplasm"/>
    <property type="evidence" value="ECO:0007669"/>
    <property type="project" value="UniProtKB-SubCell"/>
</dbReference>
<dbReference type="GO" id="GO:0005524">
    <property type="term" value="F:ATP binding"/>
    <property type="evidence" value="ECO:0007669"/>
    <property type="project" value="UniProtKB-KW"/>
</dbReference>
<dbReference type="GO" id="GO:0000049">
    <property type="term" value="F:tRNA binding"/>
    <property type="evidence" value="ECO:0007669"/>
    <property type="project" value="UniProtKB-KW"/>
</dbReference>
<dbReference type="GO" id="GO:0103016">
    <property type="term" value="F:tRNA-uridine 2-sulfurtransferase activity"/>
    <property type="evidence" value="ECO:0007669"/>
    <property type="project" value="UniProtKB-EC"/>
</dbReference>
<dbReference type="GO" id="GO:0002143">
    <property type="term" value="P:tRNA wobble position uridine thiolation"/>
    <property type="evidence" value="ECO:0007669"/>
    <property type="project" value="TreeGrafter"/>
</dbReference>
<dbReference type="CDD" id="cd01998">
    <property type="entry name" value="MnmA_TRMU-like"/>
    <property type="match status" value="1"/>
</dbReference>
<dbReference type="FunFam" id="2.30.30.280:FF:000001">
    <property type="entry name" value="tRNA-specific 2-thiouridylase MnmA"/>
    <property type="match status" value="1"/>
</dbReference>
<dbReference type="FunFam" id="2.40.30.10:FF:000023">
    <property type="entry name" value="tRNA-specific 2-thiouridylase MnmA"/>
    <property type="match status" value="1"/>
</dbReference>
<dbReference type="FunFam" id="3.40.50.620:FF:000004">
    <property type="entry name" value="tRNA-specific 2-thiouridylase MnmA"/>
    <property type="match status" value="1"/>
</dbReference>
<dbReference type="Gene3D" id="2.30.30.280">
    <property type="entry name" value="Adenine nucleotide alpha hydrolases-like domains"/>
    <property type="match status" value="1"/>
</dbReference>
<dbReference type="Gene3D" id="3.40.50.620">
    <property type="entry name" value="HUPs"/>
    <property type="match status" value="1"/>
</dbReference>
<dbReference type="Gene3D" id="2.40.30.10">
    <property type="entry name" value="Translation factors"/>
    <property type="match status" value="1"/>
</dbReference>
<dbReference type="HAMAP" id="MF_00144">
    <property type="entry name" value="tRNA_thiouridyl_MnmA"/>
    <property type="match status" value="1"/>
</dbReference>
<dbReference type="InterPro" id="IPR004506">
    <property type="entry name" value="MnmA-like"/>
</dbReference>
<dbReference type="InterPro" id="IPR046885">
    <property type="entry name" value="MnmA-like_C"/>
</dbReference>
<dbReference type="InterPro" id="IPR046884">
    <property type="entry name" value="MnmA-like_central"/>
</dbReference>
<dbReference type="InterPro" id="IPR023382">
    <property type="entry name" value="MnmA-like_central_sf"/>
</dbReference>
<dbReference type="InterPro" id="IPR014729">
    <property type="entry name" value="Rossmann-like_a/b/a_fold"/>
</dbReference>
<dbReference type="NCBIfam" id="NF001138">
    <property type="entry name" value="PRK00143.1"/>
    <property type="match status" value="1"/>
</dbReference>
<dbReference type="NCBIfam" id="TIGR00420">
    <property type="entry name" value="trmU"/>
    <property type="match status" value="1"/>
</dbReference>
<dbReference type="PANTHER" id="PTHR11933:SF5">
    <property type="entry name" value="MITOCHONDRIAL TRNA-SPECIFIC 2-THIOURIDYLASE 1"/>
    <property type="match status" value="1"/>
</dbReference>
<dbReference type="PANTHER" id="PTHR11933">
    <property type="entry name" value="TRNA 5-METHYLAMINOMETHYL-2-THIOURIDYLATE -METHYLTRANSFERASE"/>
    <property type="match status" value="1"/>
</dbReference>
<dbReference type="Pfam" id="PF03054">
    <property type="entry name" value="tRNA_Me_trans"/>
    <property type="match status" value="1"/>
</dbReference>
<dbReference type="Pfam" id="PF20258">
    <property type="entry name" value="tRNA_Me_trans_C"/>
    <property type="match status" value="1"/>
</dbReference>
<dbReference type="Pfam" id="PF20259">
    <property type="entry name" value="tRNA_Me_trans_M"/>
    <property type="match status" value="1"/>
</dbReference>
<dbReference type="SUPFAM" id="SSF52402">
    <property type="entry name" value="Adenine nucleotide alpha hydrolases-like"/>
    <property type="match status" value="1"/>
</dbReference>
<comment type="function">
    <text evidence="1">Catalyzes the 2-thiolation of uridine at the wobble position (U34) of tRNA, leading to the formation of s(2)U34.</text>
</comment>
<comment type="catalytic activity">
    <reaction evidence="1">
        <text>S-sulfanyl-L-cysteinyl-[protein] + uridine(34) in tRNA + AH2 + ATP = 2-thiouridine(34) in tRNA + L-cysteinyl-[protein] + A + AMP + diphosphate + H(+)</text>
        <dbReference type="Rhea" id="RHEA:47032"/>
        <dbReference type="Rhea" id="RHEA-COMP:10131"/>
        <dbReference type="Rhea" id="RHEA-COMP:11726"/>
        <dbReference type="Rhea" id="RHEA-COMP:11727"/>
        <dbReference type="Rhea" id="RHEA-COMP:11728"/>
        <dbReference type="ChEBI" id="CHEBI:13193"/>
        <dbReference type="ChEBI" id="CHEBI:15378"/>
        <dbReference type="ChEBI" id="CHEBI:17499"/>
        <dbReference type="ChEBI" id="CHEBI:29950"/>
        <dbReference type="ChEBI" id="CHEBI:30616"/>
        <dbReference type="ChEBI" id="CHEBI:33019"/>
        <dbReference type="ChEBI" id="CHEBI:61963"/>
        <dbReference type="ChEBI" id="CHEBI:65315"/>
        <dbReference type="ChEBI" id="CHEBI:87170"/>
        <dbReference type="ChEBI" id="CHEBI:456215"/>
        <dbReference type="EC" id="2.8.1.13"/>
    </reaction>
</comment>
<comment type="subcellular location">
    <subcellularLocation>
        <location evidence="1">Cytoplasm</location>
    </subcellularLocation>
</comment>
<comment type="similarity">
    <text evidence="1">Belongs to the MnmA/TRMU family.</text>
</comment>
<feature type="chain" id="PRO_0000349562" description="tRNA-specific 2-thiouridylase MnmA">
    <location>
        <begin position="1"/>
        <end position="383"/>
    </location>
</feature>
<feature type="region of interest" description="Interaction with target base in tRNA" evidence="1">
    <location>
        <begin position="95"/>
        <end position="97"/>
    </location>
</feature>
<feature type="region of interest" description="Interaction with tRNA" evidence="1">
    <location>
        <begin position="146"/>
        <end position="148"/>
    </location>
</feature>
<feature type="region of interest" description="Interaction with tRNA" evidence="1">
    <location>
        <begin position="308"/>
        <end position="309"/>
    </location>
</feature>
<feature type="active site" description="Nucleophile" evidence="1">
    <location>
        <position position="100"/>
    </location>
</feature>
<feature type="active site" description="Cysteine persulfide intermediate" evidence="1">
    <location>
        <position position="196"/>
    </location>
</feature>
<feature type="binding site" evidence="1">
    <location>
        <begin position="9"/>
        <end position="16"/>
    </location>
    <ligand>
        <name>ATP</name>
        <dbReference type="ChEBI" id="CHEBI:30616"/>
    </ligand>
</feature>
<feature type="binding site" evidence="1">
    <location>
        <position position="35"/>
    </location>
    <ligand>
        <name>ATP</name>
        <dbReference type="ChEBI" id="CHEBI:30616"/>
    </ligand>
</feature>
<feature type="binding site" evidence="1">
    <location>
        <position position="124"/>
    </location>
    <ligand>
        <name>ATP</name>
        <dbReference type="ChEBI" id="CHEBI:30616"/>
    </ligand>
</feature>
<feature type="site" description="Interaction with tRNA" evidence="1">
    <location>
        <position position="125"/>
    </location>
</feature>
<feature type="site" description="Interaction with tRNA" evidence="1">
    <location>
        <position position="344"/>
    </location>
</feature>
<feature type="disulfide bond" description="Alternate" evidence="1">
    <location>
        <begin position="100"/>
        <end position="196"/>
    </location>
</feature>
<name>MNMA_BURP6</name>
<gene>
    <name evidence="1" type="primary">mnmA</name>
    <name type="ordered locus">BURPS668_3354</name>
</gene>
<keyword id="KW-0067">ATP-binding</keyword>
<keyword id="KW-0963">Cytoplasm</keyword>
<keyword id="KW-1015">Disulfide bond</keyword>
<keyword id="KW-0547">Nucleotide-binding</keyword>
<keyword id="KW-0694">RNA-binding</keyword>
<keyword id="KW-0808">Transferase</keyword>
<keyword id="KW-0819">tRNA processing</keyword>
<keyword id="KW-0820">tRNA-binding</keyword>
<proteinExistence type="inferred from homology"/>
<evidence type="ECO:0000255" key="1">
    <source>
        <dbReference type="HAMAP-Rule" id="MF_00144"/>
    </source>
</evidence>
<reference key="1">
    <citation type="journal article" date="2010" name="Genome Biol. Evol.">
        <title>Continuing evolution of Burkholderia mallei through genome reduction and large-scale rearrangements.</title>
        <authorList>
            <person name="Losada L."/>
            <person name="Ronning C.M."/>
            <person name="DeShazer D."/>
            <person name="Woods D."/>
            <person name="Fedorova N."/>
            <person name="Kim H.S."/>
            <person name="Shabalina S.A."/>
            <person name="Pearson T.R."/>
            <person name="Brinkac L."/>
            <person name="Tan P."/>
            <person name="Nandi T."/>
            <person name="Crabtree J."/>
            <person name="Badger J."/>
            <person name="Beckstrom-Sternberg S."/>
            <person name="Saqib M."/>
            <person name="Schutzer S.E."/>
            <person name="Keim P."/>
            <person name="Nierman W.C."/>
        </authorList>
    </citation>
    <scope>NUCLEOTIDE SEQUENCE [LARGE SCALE GENOMIC DNA]</scope>
    <source>
        <strain>668</strain>
    </source>
</reference>
<protein>
    <recommendedName>
        <fullName evidence="1">tRNA-specific 2-thiouridylase MnmA</fullName>
        <ecNumber evidence="1">2.8.1.13</ecNumber>
    </recommendedName>
</protein>
<accession>A3NDE4</accession>